<evidence type="ECO:0000250" key="1"/>
<evidence type="ECO:0000250" key="2">
    <source>
        <dbReference type="UniProtKB" id="P41236"/>
    </source>
</evidence>
<evidence type="ECO:0000250" key="3">
    <source>
        <dbReference type="UniProtKB" id="Q9DCL8"/>
    </source>
</evidence>
<evidence type="ECO:0000256" key="4">
    <source>
        <dbReference type="SAM" id="MobiDB-lite"/>
    </source>
</evidence>
<evidence type="ECO:0000269" key="5">
    <source>
    </source>
</evidence>
<evidence type="ECO:0000269" key="6">
    <source>
    </source>
</evidence>
<evidence type="ECO:0000269" key="7">
    <source>
    </source>
</evidence>
<evidence type="ECO:0000269" key="8">
    <source>
    </source>
</evidence>
<evidence type="ECO:0000305" key="9"/>
<keyword id="KW-0007">Acetylation</keyword>
<keyword id="KW-0119">Carbohydrate metabolism</keyword>
<keyword id="KW-0903">Direct protein sequencing</keyword>
<keyword id="KW-0321">Glycogen metabolism</keyword>
<keyword id="KW-0597">Phosphoprotein</keyword>
<keyword id="KW-0650">Protein phosphatase inhibitor</keyword>
<keyword id="KW-1185">Reference proteome</keyword>
<comment type="function">
    <text>Inhibitor of protein-phosphatase 1.</text>
</comment>
<comment type="subunit">
    <text evidence="8">Heterodimer with PP1.</text>
</comment>
<comment type="PTM">
    <text evidence="1 5 7 8">Phosphorylation on Ser-44 by ATM activates PP1 by dissociating the PP1-PPP1R2 complex (By similarity). Phosphorylation on Thr-73 by GSK3 activates PP1 by dissociating the PP1-PPP1R2 complex.</text>
</comment>
<comment type="similarity">
    <text evidence="9">Belongs to the protein phosphatase inhibitor 2 family.</text>
</comment>
<protein>
    <recommendedName>
        <fullName>Protein phosphatase inhibitor 2</fullName>
        <shortName>IPP-2</shortName>
    </recommendedName>
</protein>
<proteinExistence type="evidence at protein level"/>
<name>IPP2_RABIT</name>
<reference key="1">
    <citation type="journal article" date="1994" name="J. Biol. Chem.">
        <title>Molecular mechanism of the synergistic phosphorylation of phosphatase inhibitor-2. Cloning, expression, and site-directed mutagenesis of inhibitor-2.</title>
        <authorList>
            <person name="Park I.-K."/>
            <person name="Roach P."/>
            <person name="Bondor J."/>
            <person name="Fox S.P."/>
            <person name="Depaoli-Roach A.A."/>
        </authorList>
    </citation>
    <scope>NUCLEOTIDE SEQUENCE [MRNA]</scope>
    <source>
        <strain>New Zealand white</strain>
        <tissue>Skeletal muscle</tissue>
    </source>
</reference>
<reference key="2">
    <citation type="journal article" date="1992" name="Biochem. Biophys. Res. Commun.">
        <title>PCR cloning of the cDNA of rabbit skeletal muscle protein phosphatase inhibitor-2.</title>
        <authorList>
            <person name="Zhang Z."/>
            <person name="Bai G."/>
            <person name="Lee E.Y.C."/>
        </authorList>
    </citation>
    <scope>NUCLEOTIDE SEQUENCE [MRNA]</scope>
    <source>
        <tissue>Skeletal muscle</tissue>
    </source>
</reference>
<reference key="3">
    <citation type="journal article" date="1986" name="Eur. J. Biochem.">
        <title>The protein phosphatases involved in cellular regulation. Primary structure of inhibitor-2 from rabbit skeletal muscle.</title>
        <authorList>
            <person name="Holmes C.F.B."/>
            <person name="Campbell D.G."/>
            <person name="Caudwell F.B."/>
            <person name="Aitken A."/>
            <person name="Cohen P."/>
        </authorList>
    </citation>
    <scope>PROTEIN SEQUENCE OF 2-204</scope>
    <scope>ACETYLATION AT ALA-2</scope>
    <source>
        <tissue>Skeletal muscle</tissue>
    </source>
</reference>
<reference key="4">
    <citation type="journal article" date="1984" name="Biochim. Biophys. Acta">
        <title>Amino acid sequence at the site on protein phosphatase inhibitor-2, phosphorylated by glycogen synthase kinase-3.</title>
        <authorList>
            <person name="Aitken A."/>
            <person name="Holmes C.F."/>
            <person name="Campbell D.G."/>
            <person name="Resink T.J."/>
            <person name="Cohen P."/>
            <person name="Leung C.T."/>
            <person name="Williams D.H."/>
        </authorList>
    </citation>
    <scope>PROTEIN SEQUENCE OF 67-77</scope>
    <scope>PHOSPHORYLATION AT THR-73</scope>
</reference>
<reference key="5">
    <citation type="journal article" date="1982" name="FEBS Lett.">
        <title>Reconstitution of a Mg-ATP-dependent protein phosphatase and its activation through a phosphorylation mechanism.</title>
        <authorList>
            <person name="Hemmings B.A."/>
            <person name="Resink T.J."/>
            <person name="Cohen P."/>
        </authorList>
    </citation>
    <scope>SUBUNIT</scope>
    <scope>PHOSPHORYLATION</scope>
</reference>
<reference key="6">
    <citation type="journal article" date="1987" name="Biochim. Biophys. Acta">
        <title>Analysis of the in vivo phosphorylation state of protein phosphatase inhibitor-2 from rabbit skeletal muscle by fast-atom bombardment mass spectrometry.</title>
        <authorList>
            <person name="Holmes C.F.B."/>
            <person name="Tonks N.K."/>
            <person name="Major H."/>
            <person name="Cohen P."/>
        </authorList>
    </citation>
    <scope>ACETYLATION AT ALA-2</scope>
    <scope>PHOSPHORYLATION AT SER-87; SER-121 AND SER-122</scope>
    <scope>IDENTIFICATION BY MASS SPECTROMETRY</scope>
</reference>
<dbReference type="EMBL" id="L20858">
    <property type="protein sequence ID" value="AAA17541.1"/>
    <property type="molecule type" value="mRNA"/>
</dbReference>
<dbReference type="EMBL" id="M95581">
    <property type="protein sequence ID" value="AAA31405.1"/>
    <property type="molecule type" value="mRNA"/>
</dbReference>
<dbReference type="PIR" id="I46876">
    <property type="entry name" value="I46876"/>
</dbReference>
<dbReference type="RefSeq" id="NP_001076213.1">
    <property type="nucleotide sequence ID" value="NM_001082744.2"/>
</dbReference>
<dbReference type="DIP" id="DIP-439N"/>
<dbReference type="ELM" id="P11845"/>
<dbReference type="FunCoup" id="P11845">
    <property type="interactions" value="226"/>
</dbReference>
<dbReference type="STRING" id="9986.ENSOCUP00000012136"/>
<dbReference type="iPTMnet" id="P11845"/>
<dbReference type="PaxDb" id="9986-ENSOCUP00000012136"/>
<dbReference type="Ensembl" id="ENSOCUT00000014121.4">
    <property type="protein sequence ID" value="ENSOCUP00000012136.4"/>
    <property type="gene ID" value="ENSOCUG00000014123.4"/>
</dbReference>
<dbReference type="GeneID" id="100009520"/>
<dbReference type="KEGG" id="ocu:100009520"/>
<dbReference type="CTD" id="5504"/>
<dbReference type="eggNOG" id="KOG4041">
    <property type="taxonomic scope" value="Eukaryota"/>
</dbReference>
<dbReference type="GeneTree" id="ENSGT00390000004757"/>
<dbReference type="InParanoid" id="P11845"/>
<dbReference type="OrthoDB" id="551302at2759"/>
<dbReference type="TreeFam" id="TF105536"/>
<dbReference type="Proteomes" id="UP000001811">
    <property type="component" value="Chromosome 14"/>
</dbReference>
<dbReference type="Bgee" id="ENSOCUG00000014123">
    <property type="expression patterns" value="Expressed in testis and 17 other cell types or tissues"/>
</dbReference>
<dbReference type="ExpressionAtlas" id="P11845">
    <property type="expression patterns" value="baseline"/>
</dbReference>
<dbReference type="GO" id="GO:0000164">
    <property type="term" value="C:protein phosphatase type 1 complex"/>
    <property type="evidence" value="ECO:0000315"/>
    <property type="project" value="CAFA"/>
</dbReference>
<dbReference type="GO" id="GO:0098723">
    <property type="term" value="C:skeletal muscle myofibril"/>
    <property type="evidence" value="ECO:0000314"/>
    <property type="project" value="CAFA"/>
</dbReference>
<dbReference type="GO" id="GO:0008157">
    <property type="term" value="F:protein phosphatase 1 binding"/>
    <property type="evidence" value="ECO:0000353"/>
    <property type="project" value="CAFA"/>
</dbReference>
<dbReference type="GO" id="GO:0004864">
    <property type="term" value="F:protein phosphatase inhibitor activity"/>
    <property type="evidence" value="ECO:0000314"/>
    <property type="project" value="CAFA"/>
</dbReference>
<dbReference type="GO" id="GO:0005977">
    <property type="term" value="P:glycogen metabolic process"/>
    <property type="evidence" value="ECO:0007669"/>
    <property type="project" value="UniProtKB-KW"/>
</dbReference>
<dbReference type="GO" id="GO:0009966">
    <property type="term" value="P:regulation of signal transduction"/>
    <property type="evidence" value="ECO:0007669"/>
    <property type="project" value="InterPro"/>
</dbReference>
<dbReference type="Gene3D" id="6.10.250.1050">
    <property type="match status" value="2"/>
</dbReference>
<dbReference type="InterPro" id="IPR007062">
    <property type="entry name" value="PPI-2"/>
</dbReference>
<dbReference type="PANTHER" id="PTHR12398">
    <property type="entry name" value="PROTEIN PHOSPHATASE INHIBITOR"/>
    <property type="match status" value="1"/>
</dbReference>
<dbReference type="PANTHER" id="PTHR12398:SF35">
    <property type="entry name" value="PROTEIN PHOSPHATASE INHIBITOR 2-RELATED"/>
    <property type="match status" value="1"/>
</dbReference>
<dbReference type="Pfam" id="PF04979">
    <property type="entry name" value="IPP-2"/>
    <property type="match status" value="1"/>
</dbReference>
<gene>
    <name type="primary">PPP1R2</name>
    <name type="synonym">IPP2</name>
</gene>
<accession>P11845</accession>
<organism>
    <name type="scientific">Oryctolagus cuniculus</name>
    <name type="common">Rabbit</name>
    <dbReference type="NCBI Taxonomy" id="9986"/>
    <lineage>
        <taxon>Eukaryota</taxon>
        <taxon>Metazoa</taxon>
        <taxon>Chordata</taxon>
        <taxon>Craniata</taxon>
        <taxon>Vertebrata</taxon>
        <taxon>Euteleostomi</taxon>
        <taxon>Mammalia</taxon>
        <taxon>Eutheria</taxon>
        <taxon>Euarchontoglires</taxon>
        <taxon>Glires</taxon>
        <taxon>Lagomorpha</taxon>
        <taxon>Leporidae</taxon>
        <taxon>Oryctolagus</taxon>
    </lineage>
</organism>
<feature type="initiator methionine" description="Removed" evidence="5 6">
    <location>
        <position position="1"/>
    </location>
</feature>
<feature type="chain" id="PRO_0000071483" description="Protein phosphatase inhibitor 2">
    <location>
        <begin position="2"/>
        <end position="205"/>
    </location>
</feature>
<feature type="region of interest" description="Disordered" evidence="4">
    <location>
        <begin position="1"/>
        <end position="46"/>
    </location>
</feature>
<feature type="region of interest" description="Required for binding PPP1CC" evidence="1">
    <location>
        <begin position="12"/>
        <end position="17"/>
    </location>
</feature>
<feature type="region of interest" description="Required for binding PPP1CC" evidence="1">
    <location>
        <begin position="43"/>
        <end position="55"/>
    </location>
</feature>
<feature type="region of interest" description="Disordered" evidence="4">
    <location>
        <begin position="64"/>
        <end position="205"/>
    </location>
</feature>
<feature type="region of interest" description="Required for binding PPP1CC catalytic center, displacing metal ions and inhibition of PPP1CC catalytic activity" evidence="1">
    <location>
        <begin position="147"/>
        <end position="150"/>
    </location>
</feature>
<feature type="compositionally biased region" description="Polar residues" evidence="4">
    <location>
        <begin position="17"/>
        <end position="26"/>
    </location>
</feature>
<feature type="compositionally biased region" description="Basic and acidic residues" evidence="4">
    <location>
        <begin position="35"/>
        <end position="46"/>
    </location>
</feature>
<feature type="compositionally biased region" description="Acidic residues" evidence="4">
    <location>
        <begin position="80"/>
        <end position="91"/>
    </location>
</feature>
<feature type="compositionally biased region" description="Basic and acidic residues" evidence="4">
    <location>
        <begin position="110"/>
        <end position="120"/>
    </location>
</feature>
<feature type="compositionally biased region" description="Acidic residues" evidence="4">
    <location>
        <begin position="121"/>
        <end position="130"/>
    </location>
</feature>
<feature type="compositionally biased region" description="Basic and acidic residues" evidence="4">
    <location>
        <begin position="131"/>
        <end position="143"/>
    </location>
</feature>
<feature type="compositionally biased region" description="Acidic residues" evidence="4">
    <location>
        <begin position="167"/>
        <end position="179"/>
    </location>
</feature>
<feature type="compositionally biased region" description="Polar residues" evidence="4">
    <location>
        <begin position="182"/>
        <end position="205"/>
    </location>
</feature>
<feature type="modified residue" description="N-acetylalanine" evidence="5 6">
    <location>
        <position position="2"/>
    </location>
</feature>
<feature type="modified residue" description="Phosphoserine; by ATM" evidence="2">
    <location>
        <position position="44"/>
    </location>
</feature>
<feature type="modified residue" description="Phosphothreonine; by GSK3" evidence="7">
    <location>
        <position position="73"/>
    </location>
</feature>
<feature type="modified residue" description="Phosphoserine" evidence="5">
    <location>
        <position position="87"/>
    </location>
</feature>
<feature type="modified residue" description="Phosphothreonine" evidence="2">
    <location>
        <position position="89"/>
    </location>
</feature>
<feature type="modified residue" description="Phosphothreonine" evidence="2">
    <location>
        <position position="92"/>
    </location>
</feature>
<feature type="modified residue" description="Phosphothreonine" evidence="3">
    <location>
        <position position="96"/>
    </location>
</feature>
<feature type="modified residue" description="Phosphoserine" evidence="5">
    <location>
        <position position="121"/>
    </location>
</feature>
<feature type="modified residue" description="Phosphoserine" evidence="5">
    <location>
        <position position="122"/>
    </location>
</feature>
<feature type="modified residue" description="Phosphoserine" evidence="2">
    <location>
        <position position="127"/>
    </location>
</feature>
<feature type="modified residue" description="Phosphoserine" evidence="3">
    <location>
        <position position="130"/>
    </location>
</feature>
<sequence>MAASTASHRPIKGILKNKTSSTSSRVASAEQPRGSVDEELSKKSQKWDEMNILATYHPADKDYGLMKIDEPSTPYHSMIGDDDDAYSDTETTEAMTPDTLAKKLAAAEGSEPKYRIREQESSGEEDSDLSPEEREKKRQFEMKRKLHYNEGLNIKLARQLISKDLHDDEEDEEMSETADGESMNTEESNQGSTPSDQRQNKSQSS</sequence>